<accession>Q9USJ5</accession>
<accession>A0AAN2H9E6</accession>
<reference key="1">
    <citation type="journal article" date="2002" name="Nature">
        <title>The genome sequence of Schizosaccharomyces pombe.</title>
        <authorList>
            <person name="Wood V."/>
            <person name="Gwilliam R."/>
            <person name="Rajandream M.A."/>
            <person name="Lyne M.H."/>
            <person name="Lyne R."/>
            <person name="Stewart A."/>
            <person name="Sgouros J.G."/>
            <person name="Peat N."/>
            <person name="Hayles J."/>
            <person name="Baker S.G."/>
            <person name="Basham D."/>
            <person name="Bowman S."/>
            <person name="Brooks K."/>
            <person name="Brown D."/>
            <person name="Brown S."/>
            <person name="Chillingworth T."/>
            <person name="Churcher C.M."/>
            <person name="Collins M."/>
            <person name="Connor R."/>
            <person name="Cronin A."/>
            <person name="Davis P."/>
            <person name="Feltwell T."/>
            <person name="Fraser A."/>
            <person name="Gentles S."/>
            <person name="Goble A."/>
            <person name="Hamlin N."/>
            <person name="Harris D.E."/>
            <person name="Hidalgo J."/>
            <person name="Hodgson G."/>
            <person name="Holroyd S."/>
            <person name="Hornsby T."/>
            <person name="Howarth S."/>
            <person name="Huckle E.J."/>
            <person name="Hunt S."/>
            <person name="Jagels K."/>
            <person name="James K.D."/>
            <person name="Jones L."/>
            <person name="Jones M."/>
            <person name="Leather S."/>
            <person name="McDonald S."/>
            <person name="McLean J."/>
            <person name="Mooney P."/>
            <person name="Moule S."/>
            <person name="Mungall K.L."/>
            <person name="Murphy L.D."/>
            <person name="Niblett D."/>
            <person name="Odell C."/>
            <person name="Oliver K."/>
            <person name="O'Neil S."/>
            <person name="Pearson D."/>
            <person name="Quail M.A."/>
            <person name="Rabbinowitsch E."/>
            <person name="Rutherford K.M."/>
            <person name="Rutter S."/>
            <person name="Saunders D."/>
            <person name="Seeger K."/>
            <person name="Sharp S."/>
            <person name="Skelton J."/>
            <person name="Simmonds M.N."/>
            <person name="Squares R."/>
            <person name="Squares S."/>
            <person name="Stevens K."/>
            <person name="Taylor K."/>
            <person name="Taylor R.G."/>
            <person name="Tivey A."/>
            <person name="Walsh S.V."/>
            <person name="Warren T."/>
            <person name="Whitehead S."/>
            <person name="Woodward J.R."/>
            <person name="Volckaert G."/>
            <person name="Aert R."/>
            <person name="Robben J."/>
            <person name="Grymonprez B."/>
            <person name="Weltjens I."/>
            <person name="Vanstreels E."/>
            <person name="Rieger M."/>
            <person name="Schaefer M."/>
            <person name="Mueller-Auer S."/>
            <person name="Gabel C."/>
            <person name="Fuchs M."/>
            <person name="Duesterhoeft A."/>
            <person name="Fritzc C."/>
            <person name="Holzer E."/>
            <person name="Moestl D."/>
            <person name="Hilbert H."/>
            <person name="Borzym K."/>
            <person name="Langer I."/>
            <person name="Beck A."/>
            <person name="Lehrach H."/>
            <person name="Reinhardt R."/>
            <person name="Pohl T.M."/>
            <person name="Eger P."/>
            <person name="Zimmermann W."/>
            <person name="Wedler H."/>
            <person name="Wambutt R."/>
            <person name="Purnelle B."/>
            <person name="Goffeau A."/>
            <person name="Cadieu E."/>
            <person name="Dreano S."/>
            <person name="Gloux S."/>
            <person name="Lelaure V."/>
            <person name="Mottier S."/>
            <person name="Galibert F."/>
            <person name="Aves S.J."/>
            <person name="Xiang Z."/>
            <person name="Hunt C."/>
            <person name="Moore K."/>
            <person name="Hurst S.M."/>
            <person name="Lucas M."/>
            <person name="Rochet M."/>
            <person name="Gaillardin C."/>
            <person name="Tallada V.A."/>
            <person name="Garzon A."/>
            <person name="Thode G."/>
            <person name="Daga R.R."/>
            <person name="Cruzado L."/>
            <person name="Jimenez J."/>
            <person name="Sanchez M."/>
            <person name="del Rey F."/>
            <person name="Benito J."/>
            <person name="Dominguez A."/>
            <person name="Revuelta J.L."/>
            <person name="Moreno S."/>
            <person name="Armstrong J."/>
            <person name="Forsburg S.L."/>
            <person name="Cerutti L."/>
            <person name="Lowe T."/>
            <person name="McCombie W.R."/>
            <person name="Paulsen I."/>
            <person name="Potashkin J."/>
            <person name="Shpakovski G.V."/>
            <person name="Ussery D."/>
            <person name="Barrell B.G."/>
            <person name="Nurse P."/>
        </authorList>
    </citation>
    <scope>NUCLEOTIDE SEQUENCE [LARGE SCALE GENOMIC DNA]</scope>
    <source>
        <strain>972 / ATCC 24843</strain>
    </source>
</reference>
<reference key="2">
    <citation type="journal article" date="2006" name="Nat. Biotechnol.">
        <title>ORFeome cloning and global analysis of protein localization in the fission yeast Schizosaccharomyces pombe.</title>
        <authorList>
            <person name="Matsuyama A."/>
            <person name="Arai R."/>
            <person name="Yashiroda Y."/>
            <person name="Shirai A."/>
            <person name="Kamata A."/>
            <person name="Sekido S."/>
            <person name="Kobayashi Y."/>
            <person name="Hashimoto A."/>
            <person name="Hamamoto M."/>
            <person name="Hiraoka Y."/>
            <person name="Horinouchi S."/>
            <person name="Yoshida M."/>
        </authorList>
    </citation>
    <scope>SUBCELLULAR LOCATION [LARGE SCALE ANALYSIS]</scope>
</reference>
<protein>
    <recommendedName>
        <fullName>Uroporphyrinogen decarboxylase</fullName>
        <shortName>UPD</shortName>
        <shortName>URO-D</shortName>
        <ecNumber>4.1.1.37</ecNumber>
    </recommendedName>
</protein>
<name>DCUP_SCHPO</name>
<proteinExistence type="inferred from homology"/>
<feature type="chain" id="PRO_0000187576" description="Uroporphyrinogen decarboxylase">
    <location>
        <begin position="1"/>
        <end position="359"/>
    </location>
</feature>
<feature type="binding site" evidence="1">
    <location>
        <position position="28"/>
    </location>
    <ligand>
        <name>coproporphyrinogen III</name>
        <dbReference type="ChEBI" id="CHEBI:57309"/>
    </ligand>
</feature>
<feature type="binding site" evidence="1">
    <location>
        <position position="30"/>
    </location>
    <ligand>
        <name>coproporphyrinogen III</name>
        <dbReference type="ChEBI" id="CHEBI:57309"/>
    </ligand>
</feature>
<feature type="binding site" evidence="1">
    <location>
        <position position="32"/>
    </location>
    <ligand>
        <name>coproporphyrinogen III</name>
        <dbReference type="ChEBI" id="CHEBI:57309"/>
    </ligand>
</feature>
<feature type="binding site" evidence="1">
    <location>
        <position position="79"/>
    </location>
    <ligand>
        <name>coproporphyrinogen III</name>
        <dbReference type="ChEBI" id="CHEBI:57309"/>
    </ligand>
</feature>
<feature type="binding site" evidence="1">
    <location>
        <position position="157"/>
    </location>
    <ligand>
        <name>coproporphyrinogen III</name>
        <dbReference type="ChEBI" id="CHEBI:57309"/>
    </ligand>
</feature>
<feature type="binding site" evidence="1">
    <location>
        <position position="212"/>
    </location>
    <ligand>
        <name>coproporphyrinogen III</name>
        <dbReference type="ChEBI" id="CHEBI:57309"/>
    </ligand>
</feature>
<feature type="binding site" evidence="1">
    <location>
        <position position="335"/>
    </location>
    <ligand>
        <name>coproporphyrinogen III</name>
        <dbReference type="ChEBI" id="CHEBI:57309"/>
    </ligand>
</feature>
<feature type="site" description="Transition state stabilizer" evidence="1">
    <location>
        <position position="79"/>
    </location>
</feature>
<organism>
    <name type="scientific">Schizosaccharomyces pombe (strain 972 / ATCC 24843)</name>
    <name type="common">Fission yeast</name>
    <dbReference type="NCBI Taxonomy" id="284812"/>
    <lineage>
        <taxon>Eukaryota</taxon>
        <taxon>Fungi</taxon>
        <taxon>Dikarya</taxon>
        <taxon>Ascomycota</taxon>
        <taxon>Taphrinomycotina</taxon>
        <taxon>Schizosaccharomycetes</taxon>
        <taxon>Schizosaccharomycetales</taxon>
        <taxon>Schizosaccharomycetaceae</taxon>
        <taxon>Schizosaccharomyces</taxon>
    </lineage>
</organism>
<sequence length="359" mass="40633">MYPKMKNDLILRAAKGEEVERPPVWIMRQAGRYLPEYHKLRAKQSFFEMCQTPETACELTLQPVTRFKGLLDAAIIFSDILVIPQALGMQVVMLEQKGPHFPKPLVVPEDIDLLEKTPNISAKLGYVMDAISLTREKLDGQVPLMGFSGAPWTIMAYMIEGGGSKTFAKAKSWLFRYPEASHKLLKIITDATVSYLIQQVYAGAQLLQIFDSWAGELSPEDFTEYAYPYLVRICQEVKQHLKKKKRDEVPMIVFAKGAWYAIDQLCDSGYDVIGLDWTVSPKEAVRIRGNRRVTFQGNLDPNILYGTREIIEARTKEMIQDFGGGKQGYIINLGHGITPGVNPDDVRFFLEKCHQYGSA</sequence>
<dbReference type="EC" id="4.1.1.37"/>
<dbReference type="EMBL" id="CU329672">
    <property type="protein sequence ID" value="CAK9841624.1"/>
    <property type="molecule type" value="Genomic_DNA"/>
</dbReference>
<dbReference type="PIR" id="T50443">
    <property type="entry name" value="T50443"/>
</dbReference>
<dbReference type="RefSeq" id="NP_588085.2">
    <property type="nucleotide sequence ID" value="NM_001023077.3"/>
</dbReference>
<dbReference type="SMR" id="Q9USJ5"/>
<dbReference type="BioGRID" id="275605">
    <property type="interactions" value="12"/>
</dbReference>
<dbReference type="FunCoup" id="Q9USJ5">
    <property type="interactions" value="703"/>
</dbReference>
<dbReference type="STRING" id="284812.Q9USJ5"/>
<dbReference type="PaxDb" id="4896-SPCC4B3.05c.1"/>
<dbReference type="EnsemblFungi" id="SPCC4B3.05c.1">
    <property type="protein sequence ID" value="SPCC4B3.05c.1:pep"/>
    <property type="gene ID" value="SPCC4B3.05c"/>
</dbReference>
<dbReference type="GeneID" id="2539032"/>
<dbReference type="KEGG" id="spo:2539032"/>
<dbReference type="PomBase" id="SPCC4B3.05c">
    <property type="gene designation" value="hem12"/>
</dbReference>
<dbReference type="eggNOG" id="KOG2872">
    <property type="taxonomic scope" value="Eukaryota"/>
</dbReference>
<dbReference type="HOGENOM" id="CLU_040933_0_0_1"/>
<dbReference type="InParanoid" id="Q9USJ5"/>
<dbReference type="PhylomeDB" id="Q9USJ5"/>
<dbReference type="Reactome" id="R-SPO-189451">
    <property type="pathway name" value="Heme biosynthesis"/>
</dbReference>
<dbReference type="UniPathway" id="UPA00251">
    <property type="reaction ID" value="UER00321"/>
</dbReference>
<dbReference type="PRO" id="PR:Q9USJ5"/>
<dbReference type="Proteomes" id="UP000002485">
    <property type="component" value="Chromosome III"/>
</dbReference>
<dbReference type="GO" id="GO:0005829">
    <property type="term" value="C:cytosol"/>
    <property type="evidence" value="ECO:0007005"/>
    <property type="project" value="PomBase"/>
</dbReference>
<dbReference type="GO" id="GO:0005634">
    <property type="term" value="C:nucleus"/>
    <property type="evidence" value="ECO:0007005"/>
    <property type="project" value="PomBase"/>
</dbReference>
<dbReference type="GO" id="GO:0004853">
    <property type="term" value="F:uroporphyrinogen decarboxylase activity"/>
    <property type="evidence" value="ECO:0007669"/>
    <property type="project" value="InterPro"/>
</dbReference>
<dbReference type="GO" id="GO:0006783">
    <property type="term" value="P:heme biosynthetic process"/>
    <property type="evidence" value="ECO:0000318"/>
    <property type="project" value="GO_Central"/>
</dbReference>
<dbReference type="GO" id="GO:0006779">
    <property type="term" value="P:porphyrin-containing compound biosynthetic process"/>
    <property type="evidence" value="ECO:0007669"/>
    <property type="project" value="UniProtKB-KW"/>
</dbReference>
<dbReference type="GO" id="GO:0006782">
    <property type="term" value="P:protoporphyrinogen IX biosynthetic process"/>
    <property type="evidence" value="ECO:0007669"/>
    <property type="project" value="UniProtKB-UniPathway"/>
</dbReference>
<dbReference type="CDD" id="cd00717">
    <property type="entry name" value="URO-D"/>
    <property type="match status" value="1"/>
</dbReference>
<dbReference type="FunFam" id="3.20.20.210:FF:000004">
    <property type="entry name" value="Uroporphyrinogen decarboxylase"/>
    <property type="match status" value="1"/>
</dbReference>
<dbReference type="Gene3D" id="3.20.20.210">
    <property type="match status" value="1"/>
</dbReference>
<dbReference type="HAMAP" id="MF_00218">
    <property type="entry name" value="URO_D"/>
    <property type="match status" value="1"/>
</dbReference>
<dbReference type="InterPro" id="IPR038071">
    <property type="entry name" value="UROD/MetE-like_sf"/>
</dbReference>
<dbReference type="InterPro" id="IPR006361">
    <property type="entry name" value="Uroporphyrinogen_deCO2ase_HemE"/>
</dbReference>
<dbReference type="InterPro" id="IPR000257">
    <property type="entry name" value="Uroporphyrinogen_deCOase"/>
</dbReference>
<dbReference type="NCBIfam" id="TIGR01464">
    <property type="entry name" value="hemE"/>
    <property type="match status" value="1"/>
</dbReference>
<dbReference type="PANTHER" id="PTHR21091">
    <property type="entry name" value="METHYLTETRAHYDROFOLATE:HOMOCYSTEINE METHYLTRANSFERASE RELATED"/>
    <property type="match status" value="1"/>
</dbReference>
<dbReference type="PANTHER" id="PTHR21091:SF169">
    <property type="entry name" value="UROPORPHYRINOGEN DECARBOXYLASE"/>
    <property type="match status" value="1"/>
</dbReference>
<dbReference type="Pfam" id="PF01208">
    <property type="entry name" value="URO-D"/>
    <property type="match status" value="1"/>
</dbReference>
<dbReference type="SUPFAM" id="SSF51726">
    <property type="entry name" value="UROD/MetE-like"/>
    <property type="match status" value="1"/>
</dbReference>
<dbReference type="PROSITE" id="PS00906">
    <property type="entry name" value="UROD_1"/>
    <property type="match status" value="1"/>
</dbReference>
<dbReference type="PROSITE" id="PS00907">
    <property type="entry name" value="UROD_2"/>
    <property type="match status" value="1"/>
</dbReference>
<gene>
    <name type="primary">hem12</name>
    <name evidence="5" type="ORF">SPCC4B3.05c</name>
</gene>
<keyword id="KW-0963">Cytoplasm</keyword>
<keyword id="KW-0210">Decarboxylase</keyword>
<keyword id="KW-0350">Heme biosynthesis</keyword>
<keyword id="KW-0456">Lyase</keyword>
<keyword id="KW-0539">Nucleus</keyword>
<keyword id="KW-0627">Porphyrin biosynthesis</keyword>
<keyword id="KW-1185">Reference proteome</keyword>
<comment type="function">
    <text evidence="2">Catalyzes the sequential decarboxylation of four acetate groups of uroporphyrinogen-III (octacarboxyporphyrin) to yield coproporphyrinogen-III (tetracarboxyporphyrin) with the formation of intermediate hepta-, hexa- and penta-carboxylate porphyrinogens in the heme biosynthesis pathway. Acts on a number of porphyrinogens, but only coproporphyrinogen III can ultimately be converted to heme.</text>
</comment>
<comment type="catalytic activity">
    <reaction evidence="2">
        <text>uroporphyrinogen III + 4 H(+) = coproporphyrinogen III + 4 CO2</text>
        <dbReference type="Rhea" id="RHEA:19865"/>
        <dbReference type="ChEBI" id="CHEBI:15378"/>
        <dbReference type="ChEBI" id="CHEBI:16526"/>
        <dbReference type="ChEBI" id="CHEBI:57308"/>
        <dbReference type="ChEBI" id="CHEBI:57309"/>
        <dbReference type="EC" id="4.1.1.37"/>
    </reaction>
</comment>
<comment type="catalytic activity">
    <reaction evidence="2">
        <text>uroporphyrinogen I + 4 H(+) = coproporphyrinogen I + 4 CO2</text>
        <dbReference type="Rhea" id="RHEA:31239"/>
        <dbReference type="ChEBI" id="CHEBI:15378"/>
        <dbReference type="ChEBI" id="CHEBI:16526"/>
        <dbReference type="ChEBI" id="CHEBI:62626"/>
        <dbReference type="ChEBI" id="CHEBI:62631"/>
    </reaction>
</comment>
<comment type="pathway">
    <text evidence="2">Porphyrin-containing compound metabolism; protoporphyrin-IX biosynthesis; coproporphyrinogen-III from 5-aminolevulinate: step 4/4.</text>
</comment>
<comment type="subunit">
    <text evidence="2">Monomer.</text>
</comment>
<comment type="subcellular location">
    <subcellularLocation>
        <location evidence="3">Nucleus</location>
    </subcellularLocation>
    <subcellularLocation>
        <location evidence="3">Cytoplasm</location>
    </subcellularLocation>
</comment>
<comment type="similarity">
    <text evidence="4">Belongs to the uroporphyrinogen decarboxylase family.</text>
</comment>
<evidence type="ECO:0000250" key="1">
    <source>
        <dbReference type="UniProtKB" id="P06132"/>
    </source>
</evidence>
<evidence type="ECO:0000250" key="2">
    <source>
        <dbReference type="UniProtKB" id="P32347"/>
    </source>
</evidence>
<evidence type="ECO:0000269" key="3">
    <source>
    </source>
</evidence>
<evidence type="ECO:0000305" key="4"/>
<evidence type="ECO:0000312" key="5">
    <source>
        <dbReference type="PomBase" id="SPCC4B3.05c"/>
    </source>
</evidence>